<proteinExistence type="inferred from homology"/>
<accession>A8AY29</accession>
<protein>
    <recommendedName>
        <fullName evidence="1">ATP phosphoribosyltransferase</fullName>
        <shortName evidence="1">ATP-PRT</shortName>
        <shortName evidence="1">ATP-PRTase</shortName>
        <ecNumber evidence="1">2.4.2.17</ecNumber>
    </recommendedName>
</protein>
<feature type="chain" id="PRO_1000084164" description="ATP phosphoribosyltransferase">
    <location>
        <begin position="1"/>
        <end position="214"/>
    </location>
</feature>
<keyword id="KW-0028">Amino-acid biosynthesis</keyword>
<keyword id="KW-0067">ATP-binding</keyword>
<keyword id="KW-0963">Cytoplasm</keyword>
<keyword id="KW-0328">Glycosyltransferase</keyword>
<keyword id="KW-0368">Histidine biosynthesis</keyword>
<keyword id="KW-0547">Nucleotide-binding</keyword>
<keyword id="KW-1185">Reference proteome</keyword>
<keyword id="KW-0808">Transferase</keyword>
<comment type="function">
    <text evidence="1">Catalyzes the condensation of ATP and 5-phosphoribose 1-diphosphate to form N'-(5'-phosphoribosyl)-ATP (PR-ATP). Has a crucial role in the pathway because the rate of histidine biosynthesis seems to be controlled primarily by regulation of HisG enzymatic activity.</text>
</comment>
<comment type="catalytic activity">
    <reaction evidence="1">
        <text>1-(5-phospho-beta-D-ribosyl)-ATP + diphosphate = 5-phospho-alpha-D-ribose 1-diphosphate + ATP</text>
        <dbReference type="Rhea" id="RHEA:18473"/>
        <dbReference type="ChEBI" id="CHEBI:30616"/>
        <dbReference type="ChEBI" id="CHEBI:33019"/>
        <dbReference type="ChEBI" id="CHEBI:58017"/>
        <dbReference type="ChEBI" id="CHEBI:73183"/>
        <dbReference type="EC" id="2.4.2.17"/>
    </reaction>
</comment>
<comment type="pathway">
    <text evidence="1">Amino-acid biosynthesis; L-histidine biosynthesis; L-histidine from 5-phospho-alpha-D-ribose 1-diphosphate: step 1/9.</text>
</comment>
<comment type="subunit">
    <text evidence="1">Heteromultimer composed of HisG and HisZ subunits.</text>
</comment>
<comment type="subcellular location">
    <subcellularLocation>
        <location evidence="1">Cytoplasm</location>
    </subcellularLocation>
</comment>
<comment type="domain">
    <text>Lacks the C-terminal regulatory region which is replaced by HisZ.</text>
</comment>
<comment type="similarity">
    <text evidence="1">Belongs to the ATP phosphoribosyltransferase family. Short subfamily.</text>
</comment>
<name>HIS1_STRGC</name>
<reference key="1">
    <citation type="journal article" date="2007" name="J. Bacteriol.">
        <title>Genome-wide transcriptional changes in Streptococcus gordonii in response to competence signaling peptide.</title>
        <authorList>
            <person name="Vickerman M.M."/>
            <person name="Iobst S."/>
            <person name="Jesionowski A.M."/>
            <person name="Gill S.R."/>
        </authorList>
    </citation>
    <scope>NUCLEOTIDE SEQUENCE [LARGE SCALE GENOMIC DNA]</scope>
    <source>
        <strain>Challis / ATCC 35105 / BCRC 15272 / CH1 / DL1 / V288</strain>
    </source>
</reference>
<dbReference type="EC" id="2.4.2.17" evidence="1"/>
<dbReference type="EMBL" id="CP000725">
    <property type="protein sequence ID" value="ABV11145.1"/>
    <property type="molecule type" value="Genomic_DNA"/>
</dbReference>
<dbReference type="RefSeq" id="WP_012130494.1">
    <property type="nucleotide sequence ID" value="NC_009785.1"/>
</dbReference>
<dbReference type="SMR" id="A8AY29"/>
<dbReference type="STRING" id="467705.SGO_1409"/>
<dbReference type="KEGG" id="sgo:SGO_1409"/>
<dbReference type="eggNOG" id="COG0040">
    <property type="taxonomic scope" value="Bacteria"/>
</dbReference>
<dbReference type="HOGENOM" id="CLU_038115_2_0_9"/>
<dbReference type="UniPathway" id="UPA00031">
    <property type="reaction ID" value="UER00006"/>
</dbReference>
<dbReference type="Proteomes" id="UP000001131">
    <property type="component" value="Chromosome"/>
</dbReference>
<dbReference type="GO" id="GO:0005737">
    <property type="term" value="C:cytoplasm"/>
    <property type="evidence" value="ECO:0007669"/>
    <property type="project" value="UniProtKB-SubCell"/>
</dbReference>
<dbReference type="GO" id="GO:0005524">
    <property type="term" value="F:ATP binding"/>
    <property type="evidence" value="ECO:0007669"/>
    <property type="project" value="UniProtKB-KW"/>
</dbReference>
<dbReference type="GO" id="GO:0003879">
    <property type="term" value="F:ATP phosphoribosyltransferase activity"/>
    <property type="evidence" value="ECO:0007669"/>
    <property type="project" value="UniProtKB-UniRule"/>
</dbReference>
<dbReference type="GO" id="GO:0000105">
    <property type="term" value="P:L-histidine biosynthetic process"/>
    <property type="evidence" value="ECO:0007669"/>
    <property type="project" value="UniProtKB-UniRule"/>
</dbReference>
<dbReference type="CDD" id="cd13595">
    <property type="entry name" value="PBP2_HisGs"/>
    <property type="match status" value="1"/>
</dbReference>
<dbReference type="FunFam" id="3.40.190.10:FF:000008">
    <property type="entry name" value="ATP phosphoribosyltransferase"/>
    <property type="match status" value="1"/>
</dbReference>
<dbReference type="Gene3D" id="3.40.190.10">
    <property type="entry name" value="Periplasmic binding protein-like II"/>
    <property type="match status" value="2"/>
</dbReference>
<dbReference type="HAMAP" id="MF_01018">
    <property type="entry name" value="HisG_Short"/>
    <property type="match status" value="1"/>
</dbReference>
<dbReference type="InterPro" id="IPR013820">
    <property type="entry name" value="ATP_PRibTrfase_cat"/>
</dbReference>
<dbReference type="InterPro" id="IPR018198">
    <property type="entry name" value="ATP_PRibTrfase_CS"/>
</dbReference>
<dbReference type="InterPro" id="IPR001348">
    <property type="entry name" value="ATP_PRibTrfase_HisG"/>
</dbReference>
<dbReference type="InterPro" id="IPR024893">
    <property type="entry name" value="ATP_PRibTrfase_HisG_short"/>
</dbReference>
<dbReference type="NCBIfam" id="TIGR00070">
    <property type="entry name" value="hisG"/>
    <property type="match status" value="1"/>
</dbReference>
<dbReference type="PANTHER" id="PTHR21403:SF8">
    <property type="entry name" value="ATP PHOSPHORIBOSYLTRANSFERASE"/>
    <property type="match status" value="1"/>
</dbReference>
<dbReference type="PANTHER" id="PTHR21403">
    <property type="entry name" value="ATP PHOSPHORIBOSYLTRANSFERASE ATP-PRTASE"/>
    <property type="match status" value="1"/>
</dbReference>
<dbReference type="Pfam" id="PF01634">
    <property type="entry name" value="HisG"/>
    <property type="match status" value="1"/>
</dbReference>
<dbReference type="SUPFAM" id="SSF53850">
    <property type="entry name" value="Periplasmic binding protein-like II"/>
    <property type="match status" value="1"/>
</dbReference>
<dbReference type="PROSITE" id="PS01316">
    <property type="entry name" value="ATP_P_PHORIBOSYLTR"/>
    <property type="match status" value="1"/>
</dbReference>
<evidence type="ECO:0000255" key="1">
    <source>
        <dbReference type="HAMAP-Rule" id="MF_01018"/>
    </source>
</evidence>
<gene>
    <name evidence="1" type="primary">hisG</name>
    <name type="ordered locus">SGO_1409</name>
</gene>
<organism>
    <name type="scientific">Streptococcus gordonii (strain Challis / ATCC 35105 / BCRC 15272 / CH1 / DL1 / V288)</name>
    <dbReference type="NCBI Taxonomy" id="467705"/>
    <lineage>
        <taxon>Bacteria</taxon>
        <taxon>Bacillati</taxon>
        <taxon>Bacillota</taxon>
        <taxon>Bacilli</taxon>
        <taxon>Lactobacillales</taxon>
        <taxon>Streptococcaceae</taxon>
        <taxon>Streptococcus</taxon>
    </lineage>
</organism>
<sequence>MSQITIALTKGRIEEDTVKLLTQAGFDMSFMADKGRSLIFESPDGRFRFLLVKGPDVTTYVRHGVADLGIVGKDILFEHPTGYLELLDLNFGLCKFSLASVPSYDPHDHKRKRIATKYPTVATNYFNQKGEDVEIISIQGSVEISPVLGLADAIVDIVETGHTLSANGLLVFEDICRVSVRLIANQASLKNNPDIMPFVAKIESLVGRREVAFK</sequence>